<gene>
    <name evidence="1" type="primary">cyoE</name>
    <name type="ordered locus">Shal_0251</name>
</gene>
<organism>
    <name type="scientific">Shewanella halifaxensis (strain HAW-EB4)</name>
    <dbReference type="NCBI Taxonomy" id="458817"/>
    <lineage>
        <taxon>Bacteria</taxon>
        <taxon>Pseudomonadati</taxon>
        <taxon>Pseudomonadota</taxon>
        <taxon>Gammaproteobacteria</taxon>
        <taxon>Alteromonadales</taxon>
        <taxon>Shewanellaceae</taxon>
        <taxon>Shewanella</taxon>
    </lineage>
</organism>
<evidence type="ECO:0000255" key="1">
    <source>
        <dbReference type="HAMAP-Rule" id="MF_00154"/>
    </source>
</evidence>
<sequence length="301" mass="33179">MPKPIALSRNPSTPLFQWRAYYEMTKPKVVALMLLTVLVGMCLAVPGVVPIVPLIAGMAGIGMMAGSAAAFNHLIDRRIDGLMARTYNRPLPKGRVSIAKALTFSCSLGILGFVVLYVLVNPLTAWLTFASLIGYAVVYTAYLKRATPQNIVVGGLAGAMPPLLGWTAVTGEFHGNALLLVIIIFAWTPPHFWALAIHRRVEYAKVDIPMLPVTHGVEFTKTCIFLYTILLAIACLLPVLVGMCGPVYLVSSTLLSVTFIYKAWQLKFHEEPGMAMKLFKFSIYHLMLLFIALLVDHYLWL</sequence>
<reference key="1">
    <citation type="submission" date="2008-01" db="EMBL/GenBank/DDBJ databases">
        <title>Complete sequence of Shewanella halifaxensis HAW-EB4.</title>
        <authorList>
            <consortium name="US DOE Joint Genome Institute"/>
            <person name="Copeland A."/>
            <person name="Lucas S."/>
            <person name="Lapidus A."/>
            <person name="Glavina del Rio T."/>
            <person name="Dalin E."/>
            <person name="Tice H."/>
            <person name="Bruce D."/>
            <person name="Goodwin L."/>
            <person name="Pitluck S."/>
            <person name="Sims D."/>
            <person name="Brettin T."/>
            <person name="Detter J.C."/>
            <person name="Han C."/>
            <person name="Kuske C.R."/>
            <person name="Schmutz J."/>
            <person name="Larimer F."/>
            <person name="Land M."/>
            <person name="Hauser L."/>
            <person name="Kyrpides N."/>
            <person name="Kim E."/>
            <person name="Zhao J.-S."/>
            <person name="Richardson P."/>
        </authorList>
    </citation>
    <scope>NUCLEOTIDE SEQUENCE [LARGE SCALE GENOMIC DNA]</scope>
    <source>
        <strain>HAW-EB4</strain>
    </source>
</reference>
<protein>
    <recommendedName>
        <fullName evidence="1">Protoheme IX farnesyltransferase</fullName>
        <ecNumber evidence="1">2.5.1.141</ecNumber>
    </recommendedName>
    <alternativeName>
        <fullName evidence="1">Heme B farnesyltransferase</fullName>
    </alternativeName>
    <alternativeName>
        <fullName evidence="1">Heme O synthase</fullName>
    </alternativeName>
</protein>
<keyword id="KW-0997">Cell inner membrane</keyword>
<keyword id="KW-1003">Cell membrane</keyword>
<keyword id="KW-0350">Heme biosynthesis</keyword>
<keyword id="KW-0472">Membrane</keyword>
<keyword id="KW-0808">Transferase</keyword>
<keyword id="KW-0812">Transmembrane</keyword>
<keyword id="KW-1133">Transmembrane helix</keyword>
<dbReference type="EC" id="2.5.1.141" evidence="1"/>
<dbReference type="EMBL" id="CP000931">
    <property type="protein sequence ID" value="ABZ74827.1"/>
    <property type="molecule type" value="Genomic_DNA"/>
</dbReference>
<dbReference type="RefSeq" id="WP_012275382.1">
    <property type="nucleotide sequence ID" value="NC_010334.1"/>
</dbReference>
<dbReference type="SMR" id="B0TNS4"/>
<dbReference type="STRING" id="458817.Shal_0251"/>
<dbReference type="KEGG" id="shl:Shal_0251"/>
<dbReference type="eggNOG" id="COG0109">
    <property type="taxonomic scope" value="Bacteria"/>
</dbReference>
<dbReference type="HOGENOM" id="CLU_029631_0_2_6"/>
<dbReference type="OrthoDB" id="9814417at2"/>
<dbReference type="UniPathway" id="UPA00834">
    <property type="reaction ID" value="UER00712"/>
</dbReference>
<dbReference type="Proteomes" id="UP000001317">
    <property type="component" value="Chromosome"/>
</dbReference>
<dbReference type="GO" id="GO:0005886">
    <property type="term" value="C:plasma membrane"/>
    <property type="evidence" value="ECO:0007669"/>
    <property type="project" value="UniProtKB-SubCell"/>
</dbReference>
<dbReference type="GO" id="GO:0008495">
    <property type="term" value="F:protoheme IX farnesyltransferase activity"/>
    <property type="evidence" value="ECO:0007669"/>
    <property type="project" value="UniProtKB-UniRule"/>
</dbReference>
<dbReference type="GO" id="GO:0048034">
    <property type="term" value="P:heme O biosynthetic process"/>
    <property type="evidence" value="ECO:0007669"/>
    <property type="project" value="UniProtKB-UniRule"/>
</dbReference>
<dbReference type="CDD" id="cd13957">
    <property type="entry name" value="PT_UbiA_Cox10"/>
    <property type="match status" value="1"/>
</dbReference>
<dbReference type="FunFam" id="1.10.357.140:FF:000001">
    <property type="entry name" value="Protoheme IX farnesyltransferase"/>
    <property type="match status" value="1"/>
</dbReference>
<dbReference type="Gene3D" id="1.10.357.140">
    <property type="entry name" value="UbiA prenyltransferase"/>
    <property type="match status" value="1"/>
</dbReference>
<dbReference type="HAMAP" id="MF_00154">
    <property type="entry name" value="CyoE_CtaB"/>
    <property type="match status" value="1"/>
</dbReference>
<dbReference type="InterPro" id="IPR006369">
    <property type="entry name" value="Protohaem_IX_farnesylTrfase"/>
</dbReference>
<dbReference type="InterPro" id="IPR000537">
    <property type="entry name" value="UbiA_prenyltransferase"/>
</dbReference>
<dbReference type="InterPro" id="IPR030470">
    <property type="entry name" value="UbiA_prenylTrfase_CS"/>
</dbReference>
<dbReference type="InterPro" id="IPR044878">
    <property type="entry name" value="UbiA_sf"/>
</dbReference>
<dbReference type="NCBIfam" id="TIGR01473">
    <property type="entry name" value="cyoE_ctaB"/>
    <property type="match status" value="1"/>
</dbReference>
<dbReference type="NCBIfam" id="NF003349">
    <property type="entry name" value="PRK04375.1-2"/>
    <property type="match status" value="1"/>
</dbReference>
<dbReference type="PANTHER" id="PTHR43448:SF7">
    <property type="entry name" value="4-HYDROXYBENZOATE SOLANESYLTRANSFERASE"/>
    <property type="match status" value="1"/>
</dbReference>
<dbReference type="PANTHER" id="PTHR43448">
    <property type="entry name" value="PROTOHEME IX FARNESYLTRANSFERASE, MITOCHONDRIAL"/>
    <property type="match status" value="1"/>
</dbReference>
<dbReference type="Pfam" id="PF01040">
    <property type="entry name" value="UbiA"/>
    <property type="match status" value="1"/>
</dbReference>
<dbReference type="PROSITE" id="PS00943">
    <property type="entry name" value="UBIA"/>
    <property type="match status" value="1"/>
</dbReference>
<feature type="chain" id="PRO_0000346014" description="Protoheme IX farnesyltransferase">
    <location>
        <begin position="1"/>
        <end position="301"/>
    </location>
</feature>
<feature type="transmembrane region" description="Helical" evidence="1">
    <location>
        <begin position="29"/>
        <end position="49"/>
    </location>
</feature>
<feature type="transmembrane region" description="Helical" evidence="1">
    <location>
        <begin position="51"/>
        <end position="71"/>
    </location>
</feature>
<feature type="transmembrane region" description="Helical" evidence="1">
    <location>
        <begin position="96"/>
        <end position="118"/>
    </location>
</feature>
<feature type="transmembrane region" description="Helical" evidence="1">
    <location>
        <begin position="123"/>
        <end position="143"/>
    </location>
</feature>
<feature type="transmembrane region" description="Helical" evidence="1">
    <location>
        <begin position="151"/>
        <end position="171"/>
    </location>
</feature>
<feature type="transmembrane region" description="Helical" evidence="1">
    <location>
        <begin position="177"/>
        <end position="197"/>
    </location>
</feature>
<feature type="transmembrane region" description="Helical" evidence="1">
    <location>
        <begin position="223"/>
        <end position="243"/>
    </location>
</feature>
<feature type="transmembrane region" description="Helical" evidence="1">
    <location>
        <begin position="244"/>
        <end position="264"/>
    </location>
</feature>
<feature type="transmembrane region" description="Helical" evidence="1">
    <location>
        <begin position="281"/>
        <end position="301"/>
    </location>
</feature>
<name>CYOE_SHEHH</name>
<accession>B0TNS4</accession>
<comment type="function">
    <text evidence="1">Converts heme B (protoheme IX) to heme O by substitution of the vinyl group on carbon 2 of heme B porphyrin ring with a hydroxyethyl farnesyl side group.</text>
</comment>
<comment type="catalytic activity">
    <reaction evidence="1">
        <text>heme b + (2E,6E)-farnesyl diphosphate + H2O = Fe(II)-heme o + diphosphate</text>
        <dbReference type="Rhea" id="RHEA:28070"/>
        <dbReference type="ChEBI" id="CHEBI:15377"/>
        <dbReference type="ChEBI" id="CHEBI:33019"/>
        <dbReference type="ChEBI" id="CHEBI:60344"/>
        <dbReference type="ChEBI" id="CHEBI:60530"/>
        <dbReference type="ChEBI" id="CHEBI:175763"/>
        <dbReference type="EC" id="2.5.1.141"/>
    </reaction>
</comment>
<comment type="pathway">
    <text evidence="1">Porphyrin-containing compound metabolism; heme O biosynthesis; heme O from protoheme: step 1/1.</text>
</comment>
<comment type="subcellular location">
    <subcellularLocation>
        <location evidence="1">Cell inner membrane</location>
        <topology evidence="1">Multi-pass membrane protein</topology>
    </subcellularLocation>
</comment>
<comment type="miscellaneous">
    <text evidence="1">Carbon 2 of the heme B porphyrin ring is defined according to the Fischer nomenclature.</text>
</comment>
<comment type="similarity">
    <text evidence="1">Belongs to the UbiA prenyltransferase family. Protoheme IX farnesyltransferase subfamily.</text>
</comment>
<proteinExistence type="inferred from homology"/>